<organism>
    <name type="scientific">Hydrogenovibrio crunogenus (strain DSM 25203 / XCL-2)</name>
    <name type="common">Thiomicrospira crunogena</name>
    <dbReference type="NCBI Taxonomy" id="317025"/>
    <lineage>
        <taxon>Bacteria</taxon>
        <taxon>Pseudomonadati</taxon>
        <taxon>Pseudomonadota</taxon>
        <taxon>Gammaproteobacteria</taxon>
        <taxon>Thiotrichales</taxon>
        <taxon>Piscirickettsiaceae</taxon>
        <taxon>Hydrogenovibrio</taxon>
    </lineage>
</organism>
<evidence type="ECO:0000250" key="1">
    <source>
        <dbReference type="UniProtKB" id="P45689"/>
    </source>
</evidence>
<evidence type="ECO:0000255" key="2">
    <source>
        <dbReference type="PROSITE-ProRule" id="PRU01278"/>
    </source>
</evidence>
<evidence type="ECO:0000269" key="3">
    <source>
    </source>
</evidence>
<evidence type="ECO:0000303" key="4">
    <source>
    </source>
</evidence>
<evidence type="ECO:0000305" key="5"/>
<evidence type="ECO:0000305" key="6">
    <source>
    </source>
</evidence>
<accession>Q31HD3</accession>
<proteinExistence type="evidence at protein level"/>
<name>CSOSA_HYDCU</name>
<gene>
    <name evidence="4" type="primary">csoS1A</name>
    <name type="ordered locus">Tcr_0844</name>
</gene>
<reference key="1">
    <citation type="journal article" date="2006" name="PLoS Biol.">
        <title>The genome of deep-sea vent chemolithoautotroph Thiomicrospira crunogena XCL-2.</title>
        <authorList>
            <person name="Scott K.M."/>
            <person name="Sievert S.M."/>
            <person name="Abril F.N."/>
            <person name="Ball L.A."/>
            <person name="Barrett C.J."/>
            <person name="Blake R.A."/>
            <person name="Boller A.J."/>
            <person name="Chain P.S.G."/>
            <person name="Clark J.A."/>
            <person name="Davis C.R."/>
            <person name="Detter C."/>
            <person name="Do K.F."/>
            <person name="Dobrinski K.P."/>
            <person name="Faza B.I."/>
            <person name="Fitzpatrick K.A."/>
            <person name="Freyermuth S.K."/>
            <person name="Harmer T.L."/>
            <person name="Hauser L.J."/>
            <person name="Huegler M."/>
            <person name="Kerfeld C.A."/>
            <person name="Klotz M.G."/>
            <person name="Kong W.W."/>
            <person name="Land M."/>
            <person name="Lapidus A."/>
            <person name="Larimer F.W."/>
            <person name="Longo D.L."/>
            <person name="Lucas S."/>
            <person name="Malfatti S.A."/>
            <person name="Massey S.E."/>
            <person name="Martin D.D."/>
            <person name="McCuddin Z."/>
            <person name="Meyer F."/>
            <person name="Moore J.L."/>
            <person name="Ocampo L.H. Jr."/>
            <person name="Paul J.H."/>
            <person name="Paulsen I.T."/>
            <person name="Reep D.K."/>
            <person name="Ren Q."/>
            <person name="Ross R.L."/>
            <person name="Sato P.Y."/>
            <person name="Thomas P."/>
            <person name="Tinkham L.E."/>
            <person name="Zeruth G.T."/>
        </authorList>
    </citation>
    <scope>NUCLEOTIDE SEQUENCE [LARGE SCALE GENOMIC DNA]</scope>
    <source>
        <strain>DSM 25203 / XCL-2</strain>
    </source>
</reference>
<reference key="2">
    <citation type="journal article" date="2017" name="J. Bacteriol.">
        <title>Proteomic and Mutant Analysis of the CO2 Concentrating Mechanism of Hydrothermal Vent Chemolithoautotroph Thiomicrospira crunogena.</title>
        <authorList>
            <consortium name="USF MCB4404L"/>
            <person name="Mangiapia M."/>
            <person name="Brown T.W."/>
            <person name="Chaput D."/>
            <person name="Haller E."/>
            <person name="Harmer T.L."/>
            <person name="Hashemy Z."/>
            <person name="Keeley R."/>
            <person name="Leonard J."/>
            <person name="Mancera P."/>
            <person name="Nicholson D."/>
            <person name="Stevens S."/>
            <person name="Wanjugi P."/>
            <person name="Zabinski T."/>
            <person name="Pan C."/>
            <person name="Scott K.M."/>
        </authorList>
    </citation>
    <scope>SUBCELLULAR LOCATION</scope>
    <scope>INDUCTION</scope>
    <source>
        <strain>DSM 25203 / XCL-2</strain>
    </source>
</reference>
<feature type="chain" id="PRO_0000452072" description="Carboxysome shell protein CsoS1A">
    <location>
        <begin position="1"/>
        <end position="96"/>
    </location>
</feature>
<feature type="domain" description="BMC" evidence="2">
    <location>
        <begin position="7"/>
        <end position="92"/>
    </location>
</feature>
<sequence>MSDYGIALGMIETRGLVPAIEAADAMTKAAEVRLVSREFVGGGYVTVLVRGETGAVNAAVRAGADACERVGDGLVAAHIIARPHKEVEPVLTMEQK</sequence>
<protein>
    <recommendedName>
        <fullName evidence="4">Carboxysome shell protein CsoS1A</fullName>
    </recommendedName>
</protein>
<dbReference type="EMBL" id="CP000109">
    <property type="protein sequence ID" value="ABB41440.1"/>
    <property type="molecule type" value="Genomic_DNA"/>
</dbReference>
<dbReference type="SMR" id="Q31HD3"/>
<dbReference type="STRING" id="317025.Tcr_0844"/>
<dbReference type="KEGG" id="tcx:Tcr_0844"/>
<dbReference type="eggNOG" id="COG4577">
    <property type="taxonomic scope" value="Bacteria"/>
</dbReference>
<dbReference type="HOGENOM" id="CLU_064903_5_3_6"/>
<dbReference type="OrthoDB" id="9812608at2"/>
<dbReference type="GO" id="GO:0031470">
    <property type="term" value="C:carboxysome"/>
    <property type="evidence" value="ECO:0007669"/>
    <property type="project" value="UniProtKB-SubCell"/>
</dbReference>
<dbReference type="GO" id="GO:0015977">
    <property type="term" value="P:carbon fixation"/>
    <property type="evidence" value="ECO:0007669"/>
    <property type="project" value="UniProtKB-KW"/>
</dbReference>
<dbReference type="CDD" id="cd07058">
    <property type="entry name" value="BMC_CsoS1"/>
    <property type="match status" value="1"/>
</dbReference>
<dbReference type="Gene3D" id="3.30.70.1710">
    <property type="match status" value="1"/>
</dbReference>
<dbReference type="InterPro" id="IPR020808">
    <property type="entry name" value="Bact_microcomp_CS"/>
</dbReference>
<dbReference type="InterPro" id="IPR000249">
    <property type="entry name" value="BMC_dom"/>
</dbReference>
<dbReference type="InterPro" id="IPR050575">
    <property type="entry name" value="BMC_shell"/>
</dbReference>
<dbReference type="InterPro" id="IPR037233">
    <property type="entry name" value="CcmK-like_sf"/>
</dbReference>
<dbReference type="InterPro" id="IPR044872">
    <property type="entry name" value="CcmK/CsoS1_BMC"/>
</dbReference>
<dbReference type="PANTHER" id="PTHR33941:SF11">
    <property type="entry name" value="BACTERIAL MICROCOMPARTMENT SHELL PROTEIN PDUJ"/>
    <property type="match status" value="1"/>
</dbReference>
<dbReference type="PANTHER" id="PTHR33941">
    <property type="entry name" value="PROPANEDIOL UTILIZATION PROTEIN PDUA"/>
    <property type="match status" value="1"/>
</dbReference>
<dbReference type="Pfam" id="PF00936">
    <property type="entry name" value="BMC"/>
    <property type="match status" value="1"/>
</dbReference>
<dbReference type="SMART" id="SM00877">
    <property type="entry name" value="BMC"/>
    <property type="match status" value="1"/>
</dbReference>
<dbReference type="SUPFAM" id="SSF143414">
    <property type="entry name" value="CcmK-like"/>
    <property type="match status" value="1"/>
</dbReference>
<dbReference type="PROSITE" id="PS01139">
    <property type="entry name" value="BMC_1"/>
    <property type="match status" value="1"/>
</dbReference>
<dbReference type="PROSITE" id="PS51930">
    <property type="entry name" value="BMC_2"/>
    <property type="match status" value="1"/>
</dbReference>
<keyword id="KW-1283">Bacterial microcompartment</keyword>
<keyword id="KW-0120">Carbon dioxide fixation</keyword>
<keyword id="KW-1282">Carboxysome</keyword>
<comment type="function">
    <text evidence="1">One of shell proteins of the carboxysome, a polyhedral inclusion where RuBisCO (ribulose bisphosphate carboxylase, ccbL-ccbS) is sequestered. Assembles into hexamers which make sheets that form the facets of the polyhedral carboxysome. The shell probably limits the diffusion of CO(2) into and out of the carboxysome.</text>
</comment>
<comment type="subunit">
    <text evidence="1">Homohexamer with a small central pore. Forms a CsoS2-CsoS1-RuBisCO complex.</text>
</comment>
<comment type="subcellular location">
    <subcellularLocation>
        <location evidence="6">Carboxysome</location>
    </subcellularLocation>
    <text evidence="5">This bacterium makes alpha-type carboxysomes.</text>
</comment>
<comment type="induction">
    <text evidence="3">Induced by growth in low levels of dissolved inorganic carbon (at protein level).</text>
</comment>
<comment type="domain">
    <text evidence="1">The tight homohexamer forms a small pore which is positively charged.</text>
</comment>
<comment type="similarity">
    <text evidence="5">Belongs to the bacterial microcompartments protein family. CsoS1 subfamily.</text>
</comment>